<reference evidence="3" key="1">
    <citation type="journal article" date="2011" name="Protein J.">
        <title>Identification of botryticidal proteins with similarity to NBS LRR proteins in rosemary pepper Lippia sidoides cham flowers.</title>
        <authorList>
            <person name="Moreira J.S."/>
            <person name="Almeida R.G."/>
            <person name="Tavares L.S."/>
            <person name="Santos M.O."/>
            <person name="Viccini L.F."/>
            <person name="Vasconcelos I.M."/>
            <person name="Oliveira J.A.T."/>
            <person name="Raposo N.R.B."/>
            <person name="Dias S.C."/>
            <person name="Franco O.L."/>
        </authorList>
    </citation>
    <scope>PROTEIN SEQUENCE</scope>
    <scope>FUNCTION</scope>
    <source>
        <tissue evidence="1">Flower</tissue>
    </source>
</reference>
<name>AMP1_LIPSI</name>
<protein>
    <recommendedName>
        <fullName>Putative antimicrobial peptide 1</fullName>
        <shortName evidence="2">Ls-AMP1</shortName>
    </recommendedName>
</protein>
<dbReference type="GO" id="GO:0050832">
    <property type="term" value="P:defense response to fungus"/>
    <property type="evidence" value="ECO:0007669"/>
    <property type="project" value="UniProtKB-KW"/>
</dbReference>
<dbReference type="GO" id="GO:0031640">
    <property type="term" value="P:killing of cells of another organism"/>
    <property type="evidence" value="ECO:0007669"/>
    <property type="project" value="UniProtKB-KW"/>
</dbReference>
<feature type="peptide" id="PRO_0000407550" description="Putative antimicrobial peptide 1">
    <location>
        <begin position="1"/>
        <end position="18" status="greater than"/>
    </location>
</feature>
<feature type="non-terminal residue" evidence="2">
    <location>
        <position position="18"/>
    </location>
</feature>
<accession>P86895</accession>
<keyword id="KW-0929">Antimicrobial</keyword>
<keyword id="KW-0903">Direct protein sequencing</keyword>
<keyword id="KW-0295">Fungicide</keyword>
<keyword id="KW-0611">Plant defense</keyword>
<evidence type="ECO:0000269" key="1">
    <source>
    </source>
</evidence>
<evidence type="ECO:0000303" key="2">
    <source>
    </source>
</evidence>
<evidence type="ECO:0000305" key="3"/>
<comment type="function">
    <text evidence="3">May possess antifungal activity against B.cinerea.</text>
</comment>
<comment type="caution">
    <text evidence="3">Antifungal activity was tested using a fraction containing a number of different peptides. It is not clear which peptide actually has antifungal activity.</text>
</comment>
<proteinExistence type="evidence at protein level"/>
<organism>
    <name type="scientific">Lippia sidoides</name>
    <name type="common">Pepper-rosmarin</name>
    <dbReference type="NCBI Taxonomy" id="542673"/>
    <lineage>
        <taxon>Eukaryota</taxon>
        <taxon>Viridiplantae</taxon>
        <taxon>Streptophyta</taxon>
        <taxon>Embryophyta</taxon>
        <taxon>Tracheophyta</taxon>
        <taxon>Spermatophyta</taxon>
        <taxon>Magnoliopsida</taxon>
        <taxon>eudicotyledons</taxon>
        <taxon>Gunneridae</taxon>
        <taxon>Pentapetalae</taxon>
        <taxon>asterids</taxon>
        <taxon>lamiids</taxon>
        <taxon>Lamiales</taxon>
        <taxon>Verbenaceae</taxon>
        <taxon>Lantaneae</taxon>
        <taxon>Lippia</taxon>
    </lineage>
</organism>
<sequence>EALYNSEDLYEETSDSDD</sequence>